<keyword id="KW-0963">Cytoplasm</keyword>
<keyword id="KW-0489">Methyltransferase</keyword>
<keyword id="KW-0694">RNA-binding</keyword>
<keyword id="KW-0698">rRNA processing</keyword>
<keyword id="KW-0949">S-adenosyl-L-methionine</keyword>
<keyword id="KW-0808">Transferase</keyword>
<proteinExistence type="inferred from homology"/>
<evidence type="ECO:0000255" key="1">
    <source>
        <dbReference type="HAMAP-Rule" id="MF_01858"/>
    </source>
</evidence>
<comment type="function">
    <text evidence="1">Specifically methylates the guanine in position 2445 (m2G2445) and the guanine in position 2069 (m7G2069) of 23S rRNA.</text>
</comment>
<comment type="catalytic activity">
    <reaction evidence="1">
        <text>guanosine(2445) in 23S rRNA + S-adenosyl-L-methionine = N(2)-methylguanosine(2445) in 23S rRNA + S-adenosyl-L-homocysteine + H(+)</text>
        <dbReference type="Rhea" id="RHEA:42740"/>
        <dbReference type="Rhea" id="RHEA-COMP:10215"/>
        <dbReference type="Rhea" id="RHEA-COMP:10216"/>
        <dbReference type="ChEBI" id="CHEBI:15378"/>
        <dbReference type="ChEBI" id="CHEBI:57856"/>
        <dbReference type="ChEBI" id="CHEBI:59789"/>
        <dbReference type="ChEBI" id="CHEBI:74269"/>
        <dbReference type="ChEBI" id="CHEBI:74481"/>
        <dbReference type="EC" id="2.1.1.173"/>
    </reaction>
</comment>
<comment type="catalytic activity">
    <reaction evidence="1">
        <text>guanosine(2069) in 23S rRNA + S-adenosyl-L-methionine = N(2)-methylguanosine(2069) in 23S rRNA + S-adenosyl-L-homocysteine + H(+)</text>
        <dbReference type="Rhea" id="RHEA:43772"/>
        <dbReference type="Rhea" id="RHEA-COMP:10688"/>
        <dbReference type="Rhea" id="RHEA-COMP:10689"/>
        <dbReference type="ChEBI" id="CHEBI:15378"/>
        <dbReference type="ChEBI" id="CHEBI:57856"/>
        <dbReference type="ChEBI" id="CHEBI:59789"/>
        <dbReference type="ChEBI" id="CHEBI:74269"/>
        <dbReference type="ChEBI" id="CHEBI:74481"/>
        <dbReference type="EC" id="2.1.1.264"/>
    </reaction>
</comment>
<comment type="subcellular location">
    <subcellularLocation>
        <location evidence="1">Cytoplasm</location>
    </subcellularLocation>
</comment>
<comment type="similarity">
    <text evidence="1">Belongs to the methyltransferase superfamily. RlmKL family.</text>
</comment>
<accession>A4IXN4</accession>
<name>RLMKL_FRATW</name>
<feature type="chain" id="PRO_0000366758" description="Ribosomal RNA large subunit methyltransferase K/L">
    <location>
        <begin position="1"/>
        <end position="717"/>
    </location>
</feature>
<feature type="domain" description="THUMP" evidence="1">
    <location>
        <begin position="44"/>
        <end position="155"/>
    </location>
</feature>
<protein>
    <recommendedName>
        <fullName evidence="1">Ribosomal RNA large subunit methyltransferase K/L</fullName>
    </recommendedName>
    <domain>
        <recommendedName>
            <fullName evidence="1">23S rRNA m2G2445 methyltransferase</fullName>
            <ecNumber evidence="1">2.1.1.173</ecNumber>
        </recommendedName>
        <alternativeName>
            <fullName evidence="1">rRNA (guanine-N(2)-)-methyltransferase RlmL</fullName>
        </alternativeName>
    </domain>
    <domain>
        <recommendedName>
            <fullName evidence="1">23S rRNA m7G2069 methyltransferase</fullName>
            <ecNumber evidence="1">2.1.1.264</ecNumber>
        </recommendedName>
        <alternativeName>
            <fullName evidence="1">rRNA (guanine-N(7)-)-methyltransferase RlmK</fullName>
        </alternativeName>
    </domain>
</protein>
<sequence>MQKFTFFVSCAKGIELLLKDELERLGISSQEKLAGVEFEGSIKDAYKVCIYSYLASQVMLKVATDKVINQQDLYEFISSINWMDYFAVDKTFKIIISGKHYDFNNTMFVSQKTKDAIVDQFRNVTNQRPNIDTENPDNVIKLHLHKQFVNVFLCLNIDSLHKRSYRQFQGQAPLKESLAAAILIKAGWLEELKKHQPILIDPMCGSGTILIEAALMAKNIAPVLLNKEFKIFNSKFHNQELWDNLLEIAKNSQKVTNAIICGFDIDNNVLDKAQRNIYQAGVEDVVTVKRQDIRDLENEFESEGLIVTNPPYGERLYGDQLDELLDIFNGFGDRLSQDFYGWKVAVLTSFADSIKEMQLRTTERNKFYNGAIETILYQFEINEHAKFKHETQLEKNIRIAEASAQKSDEHIDFANKLKKNLKSLKPWLKQTGLECYRLYDADIPTFAVAVDVYSEHIFLQEYRADATIDQNIAKQRFYQAIYQIHKTLDIKYENIHTRVRQRQKGKEQYQKENDKNKFHIINEFDAKFYVNFDDYLDTGIFLDHRKIRQLVAKAAKNKTLLNLFSYTCTASVHAALKGAKTTSVDMSNTYLEWGKNNFTLNNIDAKKHSFIQADCISWLKTNKDKFDVIFLDPPTFSNSKRMDDILDIQRDHELLINLAMDSLKKDGILYFSNNYRRFKMSPQILEKFNCENIDKICLSRDFLSNKNIHNCWEIKYK</sequence>
<organism>
    <name type="scientific">Francisella tularensis subsp. tularensis (strain WY96-3418)</name>
    <dbReference type="NCBI Taxonomy" id="418136"/>
    <lineage>
        <taxon>Bacteria</taxon>
        <taxon>Pseudomonadati</taxon>
        <taxon>Pseudomonadota</taxon>
        <taxon>Gammaproteobacteria</taxon>
        <taxon>Thiotrichales</taxon>
        <taxon>Francisellaceae</taxon>
        <taxon>Francisella</taxon>
    </lineage>
</organism>
<dbReference type="EC" id="2.1.1.173" evidence="1"/>
<dbReference type="EC" id="2.1.1.264" evidence="1"/>
<dbReference type="EMBL" id="CP000608">
    <property type="protein sequence ID" value="ABO46686.1"/>
    <property type="molecule type" value="Genomic_DNA"/>
</dbReference>
<dbReference type="SMR" id="A4IXN4"/>
<dbReference type="KEGG" id="ftw:FTW_0816"/>
<dbReference type="HOGENOM" id="CLU_014042_2_0_6"/>
<dbReference type="GO" id="GO:0005737">
    <property type="term" value="C:cytoplasm"/>
    <property type="evidence" value="ECO:0007669"/>
    <property type="project" value="UniProtKB-SubCell"/>
</dbReference>
<dbReference type="GO" id="GO:0052915">
    <property type="term" value="F:23S rRNA (guanine(2445)-N(2))-methyltransferase activity"/>
    <property type="evidence" value="ECO:0007669"/>
    <property type="project" value="UniProtKB-UniRule"/>
</dbReference>
<dbReference type="GO" id="GO:0003723">
    <property type="term" value="F:RNA binding"/>
    <property type="evidence" value="ECO:0007669"/>
    <property type="project" value="UniProtKB-KW"/>
</dbReference>
<dbReference type="GO" id="GO:0070043">
    <property type="term" value="F:rRNA (guanine-N7-)-methyltransferase activity"/>
    <property type="evidence" value="ECO:0007669"/>
    <property type="project" value="UniProtKB-UniRule"/>
</dbReference>
<dbReference type="CDD" id="cd02440">
    <property type="entry name" value="AdoMet_MTases"/>
    <property type="match status" value="1"/>
</dbReference>
<dbReference type="CDD" id="cd11715">
    <property type="entry name" value="THUMP_AdoMetMT"/>
    <property type="match status" value="1"/>
</dbReference>
<dbReference type="Gene3D" id="3.30.2130.30">
    <property type="match status" value="1"/>
</dbReference>
<dbReference type="Gene3D" id="3.30.750.80">
    <property type="entry name" value="RNA methyltransferase domain (HRMD) like"/>
    <property type="match status" value="1"/>
</dbReference>
<dbReference type="Gene3D" id="3.40.50.150">
    <property type="entry name" value="Vaccinia Virus protein VP39"/>
    <property type="match status" value="2"/>
</dbReference>
<dbReference type="HAMAP" id="MF_01858">
    <property type="entry name" value="23SrRNA_methyltr_KL"/>
    <property type="match status" value="1"/>
</dbReference>
<dbReference type="InterPro" id="IPR017244">
    <property type="entry name" value="23SrRNA_methyltr_KL"/>
</dbReference>
<dbReference type="InterPro" id="IPR002052">
    <property type="entry name" value="DNA_methylase_N6_adenine_CS"/>
</dbReference>
<dbReference type="InterPro" id="IPR000241">
    <property type="entry name" value="RlmKL-like_Mtase"/>
</dbReference>
<dbReference type="InterPro" id="IPR053943">
    <property type="entry name" value="RlmKL-like_Mtase_CS"/>
</dbReference>
<dbReference type="InterPro" id="IPR054170">
    <property type="entry name" value="RlmL_1st"/>
</dbReference>
<dbReference type="InterPro" id="IPR019614">
    <property type="entry name" value="SAM-dep_methyl-trfase"/>
</dbReference>
<dbReference type="InterPro" id="IPR029063">
    <property type="entry name" value="SAM-dependent_MTases_sf"/>
</dbReference>
<dbReference type="InterPro" id="IPR004114">
    <property type="entry name" value="THUMP_dom"/>
</dbReference>
<dbReference type="NCBIfam" id="NF008748">
    <property type="entry name" value="PRK11783.1"/>
    <property type="match status" value="1"/>
</dbReference>
<dbReference type="PANTHER" id="PTHR47313">
    <property type="entry name" value="RIBOSOMAL RNA LARGE SUBUNIT METHYLTRANSFERASE K/L"/>
    <property type="match status" value="1"/>
</dbReference>
<dbReference type="PANTHER" id="PTHR47313:SF1">
    <property type="entry name" value="RIBOSOMAL RNA LARGE SUBUNIT METHYLTRANSFERASE K_L"/>
    <property type="match status" value="1"/>
</dbReference>
<dbReference type="Pfam" id="PF10672">
    <property type="entry name" value="Methyltrans_SAM"/>
    <property type="match status" value="1"/>
</dbReference>
<dbReference type="Pfam" id="PF22020">
    <property type="entry name" value="RlmL_1st"/>
    <property type="match status" value="1"/>
</dbReference>
<dbReference type="Pfam" id="PF02926">
    <property type="entry name" value="THUMP"/>
    <property type="match status" value="1"/>
</dbReference>
<dbReference type="Pfam" id="PF01170">
    <property type="entry name" value="UPF0020"/>
    <property type="match status" value="1"/>
</dbReference>
<dbReference type="PIRSF" id="PIRSF037618">
    <property type="entry name" value="RNA_Mtase_bacteria_prd"/>
    <property type="match status" value="1"/>
</dbReference>
<dbReference type="SMART" id="SM00981">
    <property type="entry name" value="THUMP"/>
    <property type="match status" value="1"/>
</dbReference>
<dbReference type="SUPFAM" id="SSF53335">
    <property type="entry name" value="S-adenosyl-L-methionine-dependent methyltransferases"/>
    <property type="match status" value="2"/>
</dbReference>
<dbReference type="PROSITE" id="PS51165">
    <property type="entry name" value="THUMP"/>
    <property type="match status" value="1"/>
</dbReference>
<dbReference type="PROSITE" id="PS01261">
    <property type="entry name" value="UPF0020"/>
    <property type="match status" value="1"/>
</dbReference>
<reference key="1">
    <citation type="journal article" date="2007" name="PLoS ONE">
        <title>Complete genomic characterization of a pathogenic A.II strain of Francisella tularensis subspecies tularensis.</title>
        <authorList>
            <person name="Beckstrom-Sternberg S.M."/>
            <person name="Auerbach R.K."/>
            <person name="Godbole S."/>
            <person name="Pearson J.V."/>
            <person name="Beckstrom-Sternberg J.S."/>
            <person name="Deng Z."/>
            <person name="Munk C."/>
            <person name="Kubota K."/>
            <person name="Zhou Y."/>
            <person name="Bruce D."/>
            <person name="Noronha J."/>
            <person name="Scheuermann R.H."/>
            <person name="Wang A."/>
            <person name="Wei X."/>
            <person name="Wang J."/>
            <person name="Hao J."/>
            <person name="Wagner D.M."/>
            <person name="Brettin T.S."/>
            <person name="Brown N."/>
            <person name="Gilna P."/>
            <person name="Keim P.S."/>
        </authorList>
    </citation>
    <scope>NUCLEOTIDE SEQUENCE [LARGE SCALE GENOMIC DNA]</scope>
    <source>
        <strain>WY96-3418</strain>
    </source>
</reference>
<gene>
    <name evidence="1" type="primary">rlmL</name>
    <name type="ordered locus">FTW_0816</name>
</gene>